<proteinExistence type="inferred from homology"/>
<name>UL136_HCMVT</name>
<protein>
    <recommendedName>
        <fullName>Protein UL136</fullName>
    </recommendedName>
</protein>
<evidence type="ECO:0000250" key="1"/>
<evidence type="ECO:0000255" key="2"/>
<evidence type="ECO:0000256" key="3">
    <source>
        <dbReference type="SAM" id="MobiDB-lite"/>
    </source>
</evidence>
<evidence type="ECO:0000305" key="4"/>
<organism>
    <name type="scientific">Human cytomegalovirus (strain Towne)</name>
    <name type="common">HHV-5</name>
    <name type="synonym">Human herpesvirus 5</name>
    <dbReference type="NCBI Taxonomy" id="10363"/>
    <lineage>
        <taxon>Viruses</taxon>
        <taxon>Duplodnaviria</taxon>
        <taxon>Heunggongvirae</taxon>
        <taxon>Peploviricota</taxon>
        <taxon>Herviviricetes</taxon>
        <taxon>Herpesvirales</taxon>
        <taxon>Orthoherpesviridae</taxon>
        <taxon>Betaherpesvirinae</taxon>
        <taxon>Cytomegalovirus</taxon>
        <taxon>Cytomegalovirus humanbeta5</taxon>
        <taxon>Human cytomegalovirus</taxon>
    </lineage>
</organism>
<dbReference type="EMBL" id="FJ616285">
    <property type="protein sequence ID" value="AAR31466.1"/>
    <property type="molecule type" value="Genomic_DNA"/>
</dbReference>
<dbReference type="Proteomes" id="UP000006907">
    <property type="component" value="Segment"/>
</dbReference>
<dbReference type="GO" id="GO:0033644">
    <property type="term" value="C:host cell membrane"/>
    <property type="evidence" value="ECO:0007669"/>
    <property type="project" value="UniProtKB-SubCell"/>
</dbReference>
<dbReference type="GO" id="GO:0016020">
    <property type="term" value="C:membrane"/>
    <property type="evidence" value="ECO:0007669"/>
    <property type="project" value="UniProtKB-KW"/>
</dbReference>
<reference key="1">
    <citation type="journal article" date="2004" name="J. Gen. Virol.">
        <title>Genetic content of wild-type human cytomegalovirus.</title>
        <authorList>
            <person name="Dolan A."/>
            <person name="Cunningham C."/>
            <person name="Hector R.D."/>
            <person name="Hassan-Walker A.F."/>
            <person name="Lee L."/>
            <person name="Addison C."/>
            <person name="Dargan D.J."/>
            <person name="McGeoch D.J."/>
            <person name="Gatherer D."/>
            <person name="Emery V.C."/>
            <person name="Griffiths P.D."/>
            <person name="Sinzger C."/>
            <person name="McSharry B.P."/>
            <person name="Wilkinson G.W.G."/>
            <person name="Davison A.J."/>
        </authorList>
    </citation>
    <scope>NUCLEOTIDE SEQUENCE [LARGE SCALE GENOMIC DNA]</scope>
</reference>
<comment type="subunit">
    <text evidence="1">Interacts with host ATP1B1.</text>
</comment>
<comment type="subcellular location">
    <subcellularLocation>
        <location evidence="4">Host membrane</location>
        <topology evidence="4">Single-pass membrane protein</topology>
    </subcellularLocation>
</comment>
<comment type="similarity">
    <text evidence="4">Belongs to the HHV-5 UL136 protein family.</text>
</comment>
<keyword id="KW-1043">Host membrane</keyword>
<keyword id="KW-0945">Host-virus interaction</keyword>
<keyword id="KW-0472">Membrane</keyword>
<keyword id="KW-0812">Transmembrane</keyword>
<keyword id="KW-1133">Transmembrane helix</keyword>
<accession>Q6SWN0</accession>
<gene>
    <name type="primary">UL136</name>
</gene>
<sequence length="240" mass="27121">MSVKGVEMPEMTWDLDVGNKWRRRKALSRIHRFWECRLRVWWLSDAGVRETDPPRPRRRPTWMTAVFHVICAVLLTLMIMAIGALIAYLRYYHQDSWRDMLHDLFCGCHYPEKCRRHHERQRRRRRAMDVPDPELGDPARRPLNGAMYYGSGCRFDTVEMVDETRPAPPALSSPETGDDSNDDAVAGGGAGGVTSPATRTTSPNALLPEWMDAVHVAVQAAVQATVQVSGPRENAVSPAT</sequence>
<feature type="chain" id="PRO_0000417858" description="Protein UL136">
    <location>
        <begin position="1"/>
        <end position="240"/>
    </location>
</feature>
<feature type="transmembrane region" description="Helical" evidence="2">
    <location>
        <begin position="69"/>
        <end position="89"/>
    </location>
</feature>
<feature type="region of interest" description="Disordered" evidence="3">
    <location>
        <begin position="119"/>
        <end position="142"/>
    </location>
</feature>
<feature type="region of interest" description="Disordered" evidence="3">
    <location>
        <begin position="164"/>
        <end position="199"/>
    </location>
</feature>
<organismHost>
    <name type="scientific">Homo sapiens</name>
    <name type="common">Human</name>
    <dbReference type="NCBI Taxonomy" id="9606"/>
</organismHost>